<protein>
    <recommendedName>
        <fullName evidence="1">Small ribosomal subunit protein uS19</fullName>
    </recommendedName>
    <alternativeName>
        <fullName evidence="2">30S ribosomal protein S19</fullName>
    </alternativeName>
</protein>
<sequence length="139" mass="16111">MAAPKKTQKRMPRRREEFTYRGYKIDELKAMGLSELIPLMPARARRKFNRGLNRGEETLLEKIRGGDEKIRTHLREMIVMPEMIGKSIEIYNGKEFLKVEFQPESVFHYLGEFALTRKRVTHGSAGIGATRGSKYVPLK</sequence>
<keyword id="KW-1185">Reference proteome</keyword>
<keyword id="KW-0687">Ribonucleoprotein</keyword>
<keyword id="KW-0689">Ribosomal protein</keyword>
<keyword id="KW-0694">RNA-binding</keyword>
<keyword id="KW-0699">rRNA-binding</keyword>
<accession>A7I5P3</accession>
<reference key="1">
    <citation type="journal article" date="2015" name="Microbiology">
        <title>Genome of Methanoregula boonei 6A8 reveals adaptations to oligotrophic peatland environments.</title>
        <authorList>
            <person name="Braeuer S."/>
            <person name="Cadillo-Quiroz H."/>
            <person name="Kyrpides N."/>
            <person name="Woyke T."/>
            <person name="Goodwin L."/>
            <person name="Detter C."/>
            <person name="Podell S."/>
            <person name="Yavitt J.B."/>
            <person name="Zinder S.H."/>
        </authorList>
    </citation>
    <scope>NUCLEOTIDE SEQUENCE [LARGE SCALE GENOMIC DNA]</scope>
    <source>
        <strain>DSM 21154 / JCM 14090 / 6A8</strain>
    </source>
</reference>
<evidence type="ECO:0000255" key="1">
    <source>
        <dbReference type="HAMAP-Rule" id="MF_00531"/>
    </source>
</evidence>
<evidence type="ECO:0000305" key="2"/>
<gene>
    <name evidence="1" type="primary">rps19</name>
    <name type="ordered locus">Mboo_0536</name>
</gene>
<feature type="chain" id="PRO_0000354320" description="Small ribosomal subunit protein uS19">
    <location>
        <begin position="1"/>
        <end position="139"/>
    </location>
</feature>
<proteinExistence type="inferred from homology"/>
<name>RS19_METB6</name>
<dbReference type="EMBL" id="CP000780">
    <property type="protein sequence ID" value="ABS55054.1"/>
    <property type="molecule type" value="Genomic_DNA"/>
</dbReference>
<dbReference type="RefSeq" id="WP_012106075.1">
    <property type="nucleotide sequence ID" value="NC_009712.1"/>
</dbReference>
<dbReference type="SMR" id="A7I5P3"/>
<dbReference type="STRING" id="456442.Mboo_0536"/>
<dbReference type="GeneID" id="5411763"/>
<dbReference type="KEGG" id="mbn:Mboo_0536"/>
<dbReference type="eggNOG" id="arCOG04099">
    <property type="taxonomic scope" value="Archaea"/>
</dbReference>
<dbReference type="HOGENOM" id="CLU_097347_1_0_2"/>
<dbReference type="OrthoDB" id="30559at2157"/>
<dbReference type="Proteomes" id="UP000002408">
    <property type="component" value="Chromosome"/>
</dbReference>
<dbReference type="GO" id="GO:0022627">
    <property type="term" value="C:cytosolic small ribosomal subunit"/>
    <property type="evidence" value="ECO:0007669"/>
    <property type="project" value="TreeGrafter"/>
</dbReference>
<dbReference type="GO" id="GO:0019843">
    <property type="term" value="F:rRNA binding"/>
    <property type="evidence" value="ECO:0007669"/>
    <property type="project" value="UniProtKB-UniRule"/>
</dbReference>
<dbReference type="GO" id="GO:0003735">
    <property type="term" value="F:structural constituent of ribosome"/>
    <property type="evidence" value="ECO:0007669"/>
    <property type="project" value="InterPro"/>
</dbReference>
<dbReference type="GO" id="GO:0000028">
    <property type="term" value="P:ribosomal small subunit assembly"/>
    <property type="evidence" value="ECO:0007669"/>
    <property type="project" value="TreeGrafter"/>
</dbReference>
<dbReference type="GO" id="GO:0006412">
    <property type="term" value="P:translation"/>
    <property type="evidence" value="ECO:0007669"/>
    <property type="project" value="UniProtKB-UniRule"/>
</dbReference>
<dbReference type="FunFam" id="3.30.860.10:FF:000002">
    <property type="entry name" value="40S ribosomal protein S15"/>
    <property type="match status" value="1"/>
</dbReference>
<dbReference type="Gene3D" id="3.30.860.10">
    <property type="entry name" value="30s Ribosomal Protein S19, Chain A"/>
    <property type="match status" value="1"/>
</dbReference>
<dbReference type="HAMAP" id="MF_00531">
    <property type="entry name" value="Ribosomal_uS19"/>
    <property type="match status" value="1"/>
</dbReference>
<dbReference type="InterPro" id="IPR002222">
    <property type="entry name" value="Ribosomal_uS19"/>
</dbReference>
<dbReference type="InterPro" id="IPR005713">
    <property type="entry name" value="Ribosomal_uS19_euk/arc"/>
</dbReference>
<dbReference type="InterPro" id="IPR023575">
    <property type="entry name" value="Ribosomal_uS19_SF"/>
</dbReference>
<dbReference type="NCBIfam" id="NF003121">
    <property type="entry name" value="PRK04038.1"/>
    <property type="match status" value="1"/>
</dbReference>
<dbReference type="NCBIfam" id="TIGR01025">
    <property type="entry name" value="uS19_arch"/>
    <property type="match status" value="1"/>
</dbReference>
<dbReference type="PANTHER" id="PTHR11880">
    <property type="entry name" value="RIBOSOMAL PROTEIN S19P FAMILY MEMBER"/>
    <property type="match status" value="1"/>
</dbReference>
<dbReference type="PANTHER" id="PTHR11880:SF2">
    <property type="entry name" value="SMALL RIBOSOMAL SUBUNIT PROTEIN US19"/>
    <property type="match status" value="1"/>
</dbReference>
<dbReference type="Pfam" id="PF00203">
    <property type="entry name" value="Ribosomal_S19"/>
    <property type="match status" value="1"/>
</dbReference>
<dbReference type="PIRSF" id="PIRSF002144">
    <property type="entry name" value="Ribosomal_S19"/>
    <property type="match status" value="1"/>
</dbReference>
<dbReference type="PRINTS" id="PR00975">
    <property type="entry name" value="RIBOSOMALS19"/>
</dbReference>
<dbReference type="SUPFAM" id="SSF54570">
    <property type="entry name" value="Ribosomal protein S19"/>
    <property type="match status" value="1"/>
</dbReference>
<organism>
    <name type="scientific">Methanoregula boonei (strain DSM 21154 / JCM 14090 / 6A8)</name>
    <dbReference type="NCBI Taxonomy" id="456442"/>
    <lineage>
        <taxon>Archaea</taxon>
        <taxon>Methanobacteriati</taxon>
        <taxon>Methanobacteriota</taxon>
        <taxon>Stenosarchaea group</taxon>
        <taxon>Methanomicrobia</taxon>
        <taxon>Methanomicrobiales</taxon>
        <taxon>Methanoregulaceae</taxon>
        <taxon>Methanoregula</taxon>
    </lineage>
</organism>
<comment type="function">
    <text evidence="1">Protein S19 forms a complex with S13 that binds strongly to the 16S ribosomal RNA.</text>
</comment>
<comment type="similarity">
    <text evidence="1">Belongs to the universal ribosomal protein uS19 family.</text>
</comment>